<dbReference type="EC" id="4.1.2.13"/>
<dbReference type="EMBL" id="AY057387">
    <property type="protein sequence ID" value="AAL25625.2"/>
    <property type="molecule type" value="Genomic_DNA"/>
</dbReference>
<dbReference type="EMBL" id="AY233454">
    <property type="protein sequence ID" value="AAL34519.2"/>
    <property type="molecule type" value="mRNA"/>
</dbReference>
<dbReference type="EMBL" id="KN293995">
    <property type="protein sequence ID" value="EEH39806.1"/>
    <property type="molecule type" value="Genomic_DNA"/>
</dbReference>
<dbReference type="RefSeq" id="XP_002796107.1">
    <property type="nucleotide sequence ID" value="XM_002796061.2"/>
</dbReference>
<dbReference type="SMR" id="Q96UH7"/>
<dbReference type="STRING" id="502779.Q96UH7"/>
<dbReference type="GeneID" id="9099250"/>
<dbReference type="KEGG" id="pbl:PAAG_01995"/>
<dbReference type="VEuPathDB" id="FungiDB:PAAG_01995"/>
<dbReference type="eggNOG" id="KOG4153">
    <property type="taxonomic scope" value="Eukaryota"/>
</dbReference>
<dbReference type="HOGENOM" id="CLU_036923_0_0_1"/>
<dbReference type="OMA" id="PRTWGKL"/>
<dbReference type="OrthoDB" id="35652at2759"/>
<dbReference type="BRENDA" id="4.1.2.13">
    <property type="organism ID" value="15939"/>
</dbReference>
<dbReference type="UniPathway" id="UPA00109">
    <property type="reaction ID" value="UER00183"/>
</dbReference>
<dbReference type="Proteomes" id="UP000002059">
    <property type="component" value="Partially assembled WGS sequence"/>
</dbReference>
<dbReference type="GO" id="GO:0005829">
    <property type="term" value="C:cytosol"/>
    <property type="evidence" value="ECO:0007669"/>
    <property type="project" value="TreeGrafter"/>
</dbReference>
<dbReference type="GO" id="GO:0004332">
    <property type="term" value="F:fructose-bisphosphate aldolase activity"/>
    <property type="evidence" value="ECO:0007669"/>
    <property type="project" value="UniProtKB-EC"/>
</dbReference>
<dbReference type="GO" id="GO:0008270">
    <property type="term" value="F:zinc ion binding"/>
    <property type="evidence" value="ECO:0007669"/>
    <property type="project" value="InterPro"/>
</dbReference>
<dbReference type="GO" id="GO:0006094">
    <property type="term" value="P:gluconeogenesis"/>
    <property type="evidence" value="ECO:0007669"/>
    <property type="project" value="TreeGrafter"/>
</dbReference>
<dbReference type="GO" id="GO:0006096">
    <property type="term" value="P:glycolytic process"/>
    <property type="evidence" value="ECO:0007669"/>
    <property type="project" value="UniProtKB-UniPathway"/>
</dbReference>
<dbReference type="CDD" id="cd00946">
    <property type="entry name" value="FBP_aldolase_IIA"/>
    <property type="match status" value="1"/>
</dbReference>
<dbReference type="FunFam" id="3.20.20.70:FF:000013">
    <property type="entry name" value="Class II fructose-bisphosphate aldolase"/>
    <property type="match status" value="1"/>
</dbReference>
<dbReference type="Gene3D" id="3.20.20.70">
    <property type="entry name" value="Aldolase class I"/>
    <property type="match status" value="1"/>
</dbReference>
<dbReference type="InterPro" id="IPR013785">
    <property type="entry name" value="Aldolase_TIM"/>
</dbReference>
<dbReference type="InterPro" id="IPR000771">
    <property type="entry name" value="FBA_II"/>
</dbReference>
<dbReference type="InterPro" id="IPR006411">
    <property type="entry name" value="Fruct_bisP_bact"/>
</dbReference>
<dbReference type="NCBIfam" id="TIGR00167">
    <property type="entry name" value="cbbA"/>
    <property type="match status" value="1"/>
</dbReference>
<dbReference type="NCBIfam" id="TIGR01520">
    <property type="entry name" value="FruBisAldo_II_A"/>
    <property type="match status" value="1"/>
</dbReference>
<dbReference type="NCBIfam" id="NF006628">
    <property type="entry name" value="PRK09197.1"/>
    <property type="match status" value="1"/>
</dbReference>
<dbReference type="PANTHER" id="PTHR30559:SF0">
    <property type="entry name" value="FRUCTOSE-BISPHOSPHATE ALDOLASE"/>
    <property type="match status" value="1"/>
</dbReference>
<dbReference type="PANTHER" id="PTHR30559">
    <property type="entry name" value="FRUCTOSE-BISPHOSPHATE ALDOLASE CLASS 2"/>
    <property type="match status" value="1"/>
</dbReference>
<dbReference type="Pfam" id="PF01116">
    <property type="entry name" value="F_bP_aldolase"/>
    <property type="match status" value="1"/>
</dbReference>
<dbReference type="PIRSF" id="PIRSF001359">
    <property type="entry name" value="F_bP_aldolase_II"/>
    <property type="match status" value="1"/>
</dbReference>
<dbReference type="SUPFAM" id="SSF51569">
    <property type="entry name" value="Aldolase"/>
    <property type="match status" value="1"/>
</dbReference>
<dbReference type="PROSITE" id="PS00602">
    <property type="entry name" value="ALDOLASE_CLASS_II_1"/>
    <property type="match status" value="1"/>
</dbReference>
<dbReference type="PROSITE" id="PS00806">
    <property type="entry name" value="ALDOLASE_CLASS_II_2"/>
    <property type="match status" value="1"/>
</dbReference>
<feature type="initiator methionine" description="Removed" evidence="2">
    <location>
        <position position="1"/>
    </location>
</feature>
<feature type="chain" id="PRO_0000377379" description="Fructose-bisphosphate aldolase 1">
    <location>
        <begin position="2"/>
        <end position="360"/>
    </location>
</feature>
<feature type="active site" description="Proton donor" evidence="1">
    <location>
        <position position="110"/>
    </location>
</feature>
<feature type="binding site" evidence="1">
    <location>
        <position position="63"/>
    </location>
    <ligand>
        <name>D-glyceraldehyde 3-phosphate</name>
        <dbReference type="ChEBI" id="CHEBI:59776"/>
    </ligand>
</feature>
<feature type="binding site" evidence="1">
    <location>
        <position position="111"/>
    </location>
    <ligand>
        <name>Zn(2+)</name>
        <dbReference type="ChEBI" id="CHEBI:29105"/>
        <label>1</label>
        <note>catalytic</note>
    </ligand>
</feature>
<feature type="binding site" evidence="1">
    <location>
        <position position="145"/>
    </location>
    <ligand>
        <name>Zn(2+)</name>
        <dbReference type="ChEBI" id="CHEBI:29105"/>
        <label>2</label>
    </ligand>
</feature>
<feature type="binding site" evidence="1">
    <location>
        <position position="175"/>
    </location>
    <ligand>
        <name>Zn(2+)</name>
        <dbReference type="ChEBI" id="CHEBI:29105"/>
        <label>2</label>
    </ligand>
</feature>
<feature type="binding site" evidence="1">
    <location>
        <position position="227"/>
    </location>
    <ligand>
        <name>Zn(2+)</name>
        <dbReference type="ChEBI" id="CHEBI:29105"/>
        <label>1</label>
        <note>catalytic</note>
    </ligand>
</feature>
<feature type="binding site" evidence="1">
    <location>
        <position position="228"/>
    </location>
    <ligand>
        <name>dihydroxyacetone phosphate</name>
        <dbReference type="ChEBI" id="CHEBI:57642"/>
    </ligand>
</feature>
<feature type="binding site" evidence="1">
    <location>
        <position position="266"/>
    </location>
    <ligand>
        <name>Zn(2+)</name>
        <dbReference type="ChEBI" id="CHEBI:29105"/>
        <label>1</label>
        <note>catalytic</note>
    </ligand>
</feature>
<feature type="binding site" evidence="1">
    <location>
        <begin position="267"/>
        <end position="269"/>
    </location>
    <ligand>
        <name>dihydroxyacetone phosphate</name>
        <dbReference type="ChEBI" id="CHEBI:57642"/>
    </ligand>
</feature>
<feature type="sequence conflict" description="In Ref. 1; AAL25625/AAL34519." evidence="4" ref="1">
    <original>Y</original>
    <variation>H</variation>
    <location>
        <position position="248"/>
    </location>
</feature>
<feature type="sequence conflict" description="In Ref. 1; AAL25625/AAL34519." evidence="4" ref="1">
    <original>S</original>
    <variation>C</variation>
    <location>
        <position position="344"/>
    </location>
</feature>
<accession>Q96UH7</accession>
<accession>C1GU00</accession>
<accession>Q8X219</accession>
<sequence length="360" mass="39632">MGVKDILSRKTGVIVGDDVLRLFQHAQEKVFAIPAINVTSSSTVVAALEAARDKNSPIILQVSQGGAAFFAGKGVPNGKQEASVAGAIAAAHYIRSIAPSYGIPVVLHTDHCAKKLLPWLDGMLDADECYFKLHNEPLFSSHMIDLSEESVEWNIETTAKYLKRAAPMKQWLEMEIGITGGEEDGVNNESVDNNSLYTQPEDIYTIYKTLSAISPYFSIAAGFGNVHGVYKPGNVRLHPELLSKHQAYVKEKTGSSKNKPVYLVFHGGSGSTKAEFKEAISYGVVKVNLDTDLQYAYLSGVRDFVLKKKDYLMSAVGNPEGEDKPNKKYFDPRVWIREGEKTMSARVQEAFDDFNTSNQL</sequence>
<name>ALF1_PARBA</name>
<protein>
    <recommendedName>
        <fullName>Fructose-bisphosphate aldolase 1</fullName>
        <shortName>FBP aldolase 1</shortName>
        <shortName>FBPA 1</shortName>
        <ecNumber>4.1.2.13</ecNumber>
    </recommendedName>
    <alternativeName>
        <fullName>Fructose-1,6-bisphosphate aldolase 1</fullName>
    </alternativeName>
</protein>
<comment type="function">
    <text evidence="1">Catalyzes the aldol condensation of dihydroxyacetone phosphate (DHAP or glycerone-phosphate) with glyceraldehyde 3-phosphate (G3P) to form fructose 1,6-bisphosphate (FBP) in gluconeogenesis and the reverse reaction in glycolysis.</text>
</comment>
<comment type="catalytic activity">
    <reaction>
        <text>beta-D-fructose 1,6-bisphosphate = D-glyceraldehyde 3-phosphate + dihydroxyacetone phosphate</text>
        <dbReference type="Rhea" id="RHEA:14729"/>
        <dbReference type="ChEBI" id="CHEBI:32966"/>
        <dbReference type="ChEBI" id="CHEBI:57642"/>
        <dbReference type="ChEBI" id="CHEBI:59776"/>
        <dbReference type="EC" id="4.1.2.13"/>
    </reaction>
</comment>
<comment type="cofactor">
    <cofactor evidence="1">
        <name>Zn(2+)</name>
        <dbReference type="ChEBI" id="CHEBI:29105"/>
    </cofactor>
    <text evidence="1">Binds 2 Zn(2+) ions per subunit. One is catalytic and the other provides a structural contribution.</text>
</comment>
<comment type="pathway">
    <text>Carbohydrate degradation; glycolysis; D-glyceraldehyde 3-phosphate and glycerone phosphate from D-glucose: step 4/4.</text>
</comment>
<comment type="subunit">
    <text evidence="1">Homodimer.</text>
</comment>
<comment type="induction">
    <text evidence="2 3">Preferentially expressed in yeast cells, the host parasitic phase.</text>
</comment>
<comment type="similarity">
    <text evidence="4">Belongs to the class II fructose-bisphosphate aldolase family.</text>
</comment>
<gene>
    <name type="primary">FBA1</name>
    <name type="ORF">PAAG_01995</name>
</gene>
<evidence type="ECO:0000250" key="1"/>
<evidence type="ECO:0000269" key="2">
    <source>
    </source>
</evidence>
<evidence type="ECO:0000269" key="3">
    <source>
    </source>
</evidence>
<evidence type="ECO:0000305" key="4"/>
<proteinExistence type="evidence at protein level"/>
<reference key="1">
    <citation type="journal article" date="2005" name="Fungal Genet. Biol.">
        <title>Paracoccidioides brasiliensis presents two different cDNAs encoding homologues of the fructose 1,6-biphosphate aldolase: protein isolation, cloning of the cDNAs and genes, structural, phylogenetic, and expression analysis.</title>
        <authorList>
            <person name="Carneiro L.C."/>
            <person name="de Faria F.P."/>
            <person name="Felipe M.S.S."/>
            <person name="Pereira M."/>
            <person name="de Almeida Soares C.M."/>
        </authorList>
    </citation>
    <scope>NUCLEOTIDE SEQUENCE [GENOMIC DNA / MRNA]</scope>
    <scope>PROTEIN SEQUENCE OF 328-339 AND 343-359</scope>
    <scope>INDUCTION</scope>
</reference>
<reference key="2">
    <citation type="journal article" date="2011" name="PLoS Genet.">
        <title>Comparative genomic analysis of human fungal pathogens causing paracoccidioidomycosis.</title>
        <authorList>
            <person name="Desjardins C.A."/>
            <person name="Champion M.D."/>
            <person name="Holder J.W."/>
            <person name="Muszewska A."/>
            <person name="Goldberg J."/>
            <person name="Bailao A.M."/>
            <person name="Brigido M.M."/>
            <person name="Ferreira M.E."/>
            <person name="Garcia A.M."/>
            <person name="Grynberg M."/>
            <person name="Gujja S."/>
            <person name="Heiman D.I."/>
            <person name="Henn M.R."/>
            <person name="Kodira C.D."/>
            <person name="Leon-Narvaez H."/>
            <person name="Longo L.V.G."/>
            <person name="Ma L.-J."/>
            <person name="Malavazi I."/>
            <person name="Matsuo A.L."/>
            <person name="Morais F.V."/>
            <person name="Pereira M."/>
            <person name="Rodriguez-Brito S."/>
            <person name="Sakthikumar S."/>
            <person name="Salem-Izacc S.M."/>
            <person name="Sykes S.M."/>
            <person name="Teixeira M.M."/>
            <person name="Vallejo M.C."/>
            <person name="Walter M.E."/>
            <person name="Yandava C."/>
            <person name="Young S."/>
            <person name="Zeng Q."/>
            <person name="Zucker J."/>
            <person name="Felipe M.S."/>
            <person name="Goldman G.H."/>
            <person name="Haas B.J."/>
            <person name="McEwen J.G."/>
            <person name="Nino-Vega G."/>
            <person name="Puccia R."/>
            <person name="San-Blas G."/>
            <person name="Soares C.M."/>
            <person name="Birren B.W."/>
            <person name="Cuomo C.A."/>
        </authorList>
    </citation>
    <scope>NUCLEOTIDE SEQUENCE [LARGE SCALE GENOMIC DNA]</scope>
    <source>
        <strain>ATCC MYA-826 / Pb01</strain>
    </source>
</reference>
<reference key="3">
    <citation type="journal article" date="2001" name="Microbes Infect.">
        <title>Two-dimensional electrophoresis and characterization of antigens from Paracoccidioides brasiliensis.</title>
        <authorList>
            <person name="da Fonseca C.A."/>
            <person name="Jesuino R.S.A."/>
            <person name="Felipe M.S.S."/>
            <person name="Cunha D.A."/>
            <person name="Brito W.A."/>
            <person name="de Almeida Soares C.M."/>
        </authorList>
    </citation>
    <scope>PROTEIN SEQUENCE OF 2-37</scope>
    <scope>INDUCTION</scope>
</reference>
<organism>
    <name type="scientific">Paracoccidioides lutzii (strain ATCC MYA-826 / Pb01)</name>
    <name type="common">Paracoccidioides brasiliensis</name>
    <dbReference type="NCBI Taxonomy" id="502779"/>
    <lineage>
        <taxon>Eukaryota</taxon>
        <taxon>Fungi</taxon>
        <taxon>Dikarya</taxon>
        <taxon>Ascomycota</taxon>
        <taxon>Pezizomycotina</taxon>
        <taxon>Eurotiomycetes</taxon>
        <taxon>Eurotiomycetidae</taxon>
        <taxon>Onygenales</taxon>
        <taxon>Ajellomycetaceae</taxon>
        <taxon>Paracoccidioides</taxon>
    </lineage>
</organism>
<keyword id="KW-0903">Direct protein sequencing</keyword>
<keyword id="KW-0324">Glycolysis</keyword>
<keyword id="KW-0456">Lyase</keyword>
<keyword id="KW-0479">Metal-binding</keyword>
<keyword id="KW-1185">Reference proteome</keyword>
<keyword id="KW-0862">Zinc</keyword>